<accession>O34896</accession>
<accession>Q796N0</accession>
<gene>
    <name type="primary">uxuB</name>
    <name type="synonym">yjmF</name>
    <name type="ordered locus">BSU12350</name>
</gene>
<comment type="induction">
    <text evidence="2">Induced by galacturonate, repressed by glucose.</text>
</comment>
<comment type="miscellaneous">
    <text>Member of the exu locus which is required for galacturonate utilization.</text>
</comment>
<comment type="similarity">
    <text evidence="1">Belongs to the short-chain dehydrogenases/reductases (SDR) family.</text>
</comment>
<organism>
    <name type="scientific">Bacillus subtilis (strain 168)</name>
    <dbReference type="NCBI Taxonomy" id="224308"/>
    <lineage>
        <taxon>Bacteria</taxon>
        <taxon>Bacillati</taxon>
        <taxon>Bacillota</taxon>
        <taxon>Bacilli</taxon>
        <taxon>Bacillales</taxon>
        <taxon>Bacillaceae</taxon>
        <taxon>Bacillus</taxon>
    </lineage>
</organism>
<feature type="chain" id="PRO_0000360001" description="Uncharacterized oxidoreductase UxuB">
    <location>
        <begin position="1"/>
        <end position="278"/>
    </location>
</feature>
<dbReference type="EC" id="1.-.-.-"/>
<dbReference type="EMBL" id="AF015825">
    <property type="protein sequence ID" value="AAC46331.1"/>
    <property type="molecule type" value="Genomic_DNA"/>
</dbReference>
<dbReference type="EMBL" id="AL009126">
    <property type="protein sequence ID" value="CAB13092.1"/>
    <property type="molecule type" value="Genomic_DNA"/>
</dbReference>
<dbReference type="PIR" id="H69852">
    <property type="entry name" value="H69852"/>
</dbReference>
<dbReference type="RefSeq" id="NP_389117.1">
    <property type="nucleotide sequence ID" value="NC_000964.3"/>
</dbReference>
<dbReference type="RefSeq" id="WP_003245605.1">
    <property type="nucleotide sequence ID" value="NZ_OZ025638.1"/>
</dbReference>
<dbReference type="SMR" id="O34896"/>
<dbReference type="FunCoup" id="O34896">
    <property type="interactions" value="8"/>
</dbReference>
<dbReference type="STRING" id="224308.BSU12350"/>
<dbReference type="jPOST" id="O34896"/>
<dbReference type="PaxDb" id="224308-BSU12350"/>
<dbReference type="EnsemblBacteria" id="CAB13092">
    <property type="protein sequence ID" value="CAB13092"/>
    <property type="gene ID" value="BSU_12350"/>
</dbReference>
<dbReference type="GeneID" id="939418"/>
<dbReference type="KEGG" id="bsu:BSU12350"/>
<dbReference type="PATRIC" id="fig|224308.179.peg.1336"/>
<dbReference type="eggNOG" id="COG1028">
    <property type="taxonomic scope" value="Bacteria"/>
</dbReference>
<dbReference type="InParanoid" id="O34896"/>
<dbReference type="OrthoDB" id="9803333at2"/>
<dbReference type="PhylomeDB" id="O34896"/>
<dbReference type="BioCyc" id="BSUB:BSU12350-MONOMER"/>
<dbReference type="Proteomes" id="UP000001570">
    <property type="component" value="Chromosome"/>
</dbReference>
<dbReference type="GO" id="GO:0016616">
    <property type="term" value="F:oxidoreductase activity, acting on the CH-OH group of donors, NAD or NADP as acceptor"/>
    <property type="evidence" value="ECO:0000318"/>
    <property type="project" value="GO_Central"/>
</dbReference>
<dbReference type="CDD" id="cd08935">
    <property type="entry name" value="mannonate_red_SDR_c"/>
    <property type="match status" value="1"/>
</dbReference>
<dbReference type="FunFam" id="3.40.50.720:FF:000240">
    <property type="entry name" value="SDR family oxidoreductase"/>
    <property type="match status" value="1"/>
</dbReference>
<dbReference type="Gene3D" id="3.40.50.720">
    <property type="entry name" value="NAD(P)-binding Rossmann-like Domain"/>
    <property type="match status" value="1"/>
</dbReference>
<dbReference type="InterPro" id="IPR036291">
    <property type="entry name" value="NAD(P)-bd_dom_sf"/>
</dbReference>
<dbReference type="InterPro" id="IPR020904">
    <property type="entry name" value="Sc_DH/Rdtase_CS"/>
</dbReference>
<dbReference type="InterPro" id="IPR002347">
    <property type="entry name" value="SDR_fam"/>
</dbReference>
<dbReference type="NCBIfam" id="NF006132">
    <property type="entry name" value="PRK08277.1"/>
    <property type="match status" value="1"/>
</dbReference>
<dbReference type="PANTHER" id="PTHR42760:SF115">
    <property type="entry name" value="3-OXOACYL-[ACYL-CARRIER-PROTEIN] REDUCTASE FABG"/>
    <property type="match status" value="1"/>
</dbReference>
<dbReference type="PANTHER" id="PTHR42760">
    <property type="entry name" value="SHORT-CHAIN DEHYDROGENASES/REDUCTASES FAMILY MEMBER"/>
    <property type="match status" value="1"/>
</dbReference>
<dbReference type="Pfam" id="PF00106">
    <property type="entry name" value="adh_short"/>
    <property type="match status" value="1"/>
</dbReference>
<dbReference type="PRINTS" id="PR00081">
    <property type="entry name" value="GDHRDH"/>
</dbReference>
<dbReference type="PRINTS" id="PR00080">
    <property type="entry name" value="SDRFAMILY"/>
</dbReference>
<dbReference type="SUPFAM" id="SSF51735">
    <property type="entry name" value="NAD(P)-binding Rossmann-fold domains"/>
    <property type="match status" value="1"/>
</dbReference>
<dbReference type="PROSITE" id="PS00061">
    <property type="entry name" value="ADH_SHORT"/>
    <property type="match status" value="1"/>
</dbReference>
<keyword id="KW-0560">Oxidoreductase</keyword>
<keyword id="KW-1185">Reference proteome</keyword>
<protein>
    <recommendedName>
        <fullName>Uncharacterized oxidoreductase UxuB</fullName>
        <ecNumber>1.-.-.-</ecNumber>
    </recommendedName>
</protein>
<sequence>MIPLHENLAGKTAVITGGSGVLCSAMARELARHGMKVAILNRTAEKGQAVVKEITAAGGTACAVAADVLDRMSLERAKEDILGQFGAVDLLINGAGGNHPDAITDVETYEEAGEGQSFFDMDERGFLTVFSTNFTGAFLASQVFGKELLKADSPAIINLSSMSAYSPMTKVPAYSAAKASINNFTMWMAVHFAETGLRVNAIAPGFFLTKQNHDLLINQDGTFTSRSHKIIAGTPMKRFGKPEDLLGTLLWLADESYSGFVTGITVPVDGGFMAYSGV</sequence>
<reference key="1">
    <citation type="journal article" date="1998" name="Microbiology">
        <title>A 35.7 kb DNA fragment from the Bacillus subtilis chromosome containing a putative 12.3 kb operon involved in hexuronate catabolism and a perfectly symmetrical hypothetical catabolite-responsive element.</title>
        <authorList>
            <person name="Rivolta C."/>
            <person name="Soldo B."/>
            <person name="Lazarevic V."/>
            <person name="Joris B."/>
            <person name="Mauel C."/>
            <person name="Karamata D."/>
        </authorList>
    </citation>
    <scope>NUCLEOTIDE SEQUENCE [GENOMIC DNA]</scope>
    <scope>PROBABLE OPERON STRUCTURE</scope>
    <source>
        <strain>168</strain>
    </source>
</reference>
<reference key="2">
    <citation type="journal article" date="1997" name="Nature">
        <title>The complete genome sequence of the Gram-positive bacterium Bacillus subtilis.</title>
        <authorList>
            <person name="Kunst F."/>
            <person name="Ogasawara N."/>
            <person name="Moszer I."/>
            <person name="Albertini A.M."/>
            <person name="Alloni G."/>
            <person name="Azevedo V."/>
            <person name="Bertero M.G."/>
            <person name="Bessieres P."/>
            <person name="Bolotin A."/>
            <person name="Borchert S."/>
            <person name="Borriss R."/>
            <person name="Boursier L."/>
            <person name="Brans A."/>
            <person name="Braun M."/>
            <person name="Brignell S.C."/>
            <person name="Bron S."/>
            <person name="Brouillet S."/>
            <person name="Bruschi C.V."/>
            <person name="Caldwell B."/>
            <person name="Capuano V."/>
            <person name="Carter N.M."/>
            <person name="Choi S.-K."/>
            <person name="Codani J.-J."/>
            <person name="Connerton I.F."/>
            <person name="Cummings N.J."/>
            <person name="Daniel R.A."/>
            <person name="Denizot F."/>
            <person name="Devine K.M."/>
            <person name="Duesterhoeft A."/>
            <person name="Ehrlich S.D."/>
            <person name="Emmerson P.T."/>
            <person name="Entian K.-D."/>
            <person name="Errington J."/>
            <person name="Fabret C."/>
            <person name="Ferrari E."/>
            <person name="Foulger D."/>
            <person name="Fritz C."/>
            <person name="Fujita M."/>
            <person name="Fujita Y."/>
            <person name="Fuma S."/>
            <person name="Galizzi A."/>
            <person name="Galleron N."/>
            <person name="Ghim S.-Y."/>
            <person name="Glaser P."/>
            <person name="Goffeau A."/>
            <person name="Golightly E.J."/>
            <person name="Grandi G."/>
            <person name="Guiseppi G."/>
            <person name="Guy B.J."/>
            <person name="Haga K."/>
            <person name="Haiech J."/>
            <person name="Harwood C.R."/>
            <person name="Henaut A."/>
            <person name="Hilbert H."/>
            <person name="Holsappel S."/>
            <person name="Hosono S."/>
            <person name="Hullo M.-F."/>
            <person name="Itaya M."/>
            <person name="Jones L.-M."/>
            <person name="Joris B."/>
            <person name="Karamata D."/>
            <person name="Kasahara Y."/>
            <person name="Klaerr-Blanchard M."/>
            <person name="Klein C."/>
            <person name="Kobayashi Y."/>
            <person name="Koetter P."/>
            <person name="Koningstein G."/>
            <person name="Krogh S."/>
            <person name="Kumano M."/>
            <person name="Kurita K."/>
            <person name="Lapidus A."/>
            <person name="Lardinois S."/>
            <person name="Lauber J."/>
            <person name="Lazarevic V."/>
            <person name="Lee S.-M."/>
            <person name="Levine A."/>
            <person name="Liu H."/>
            <person name="Masuda S."/>
            <person name="Mauel C."/>
            <person name="Medigue C."/>
            <person name="Medina N."/>
            <person name="Mellado R.P."/>
            <person name="Mizuno M."/>
            <person name="Moestl D."/>
            <person name="Nakai S."/>
            <person name="Noback M."/>
            <person name="Noone D."/>
            <person name="O'Reilly M."/>
            <person name="Ogawa K."/>
            <person name="Ogiwara A."/>
            <person name="Oudega B."/>
            <person name="Park S.-H."/>
            <person name="Parro V."/>
            <person name="Pohl T.M."/>
            <person name="Portetelle D."/>
            <person name="Porwollik S."/>
            <person name="Prescott A.M."/>
            <person name="Presecan E."/>
            <person name="Pujic P."/>
            <person name="Purnelle B."/>
            <person name="Rapoport G."/>
            <person name="Rey M."/>
            <person name="Reynolds S."/>
            <person name="Rieger M."/>
            <person name="Rivolta C."/>
            <person name="Rocha E."/>
            <person name="Roche B."/>
            <person name="Rose M."/>
            <person name="Sadaie Y."/>
            <person name="Sato T."/>
            <person name="Scanlan E."/>
            <person name="Schleich S."/>
            <person name="Schroeter R."/>
            <person name="Scoffone F."/>
            <person name="Sekiguchi J."/>
            <person name="Sekowska A."/>
            <person name="Seror S.J."/>
            <person name="Serror P."/>
            <person name="Shin B.-S."/>
            <person name="Soldo B."/>
            <person name="Sorokin A."/>
            <person name="Tacconi E."/>
            <person name="Takagi T."/>
            <person name="Takahashi H."/>
            <person name="Takemaru K."/>
            <person name="Takeuchi M."/>
            <person name="Tamakoshi A."/>
            <person name="Tanaka T."/>
            <person name="Terpstra P."/>
            <person name="Tognoni A."/>
            <person name="Tosato V."/>
            <person name="Uchiyama S."/>
            <person name="Vandenbol M."/>
            <person name="Vannier F."/>
            <person name="Vassarotti A."/>
            <person name="Viari A."/>
            <person name="Wambutt R."/>
            <person name="Wedler E."/>
            <person name="Wedler H."/>
            <person name="Weitzenegger T."/>
            <person name="Winters P."/>
            <person name="Wipat A."/>
            <person name="Yamamoto H."/>
            <person name="Yamane K."/>
            <person name="Yasumoto K."/>
            <person name="Yata K."/>
            <person name="Yoshida K."/>
            <person name="Yoshikawa H.-F."/>
            <person name="Zumstein E."/>
            <person name="Yoshikawa H."/>
            <person name="Danchin A."/>
        </authorList>
    </citation>
    <scope>NUCLEOTIDE SEQUENCE [LARGE SCALE GENOMIC DNA]</scope>
    <source>
        <strain>168</strain>
    </source>
</reference>
<reference key="3">
    <citation type="journal article" date="1999" name="J. Bacteriol.">
        <title>Regulation of hexuronate utilization in Bacillus subtilis.</title>
        <authorList>
            <person name="Mekjian K.R."/>
            <person name="Bryan E.M."/>
            <person name="Beall B.W."/>
            <person name="Moran C.P. Jr."/>
        </authorList>
    </citation>
    <scope>PROBABLE OPERON STRUCTURE</scope>
    <scope>INDUCTION</scope>
    <source>
        <strain>168 / MB24</strain>
    </source>
</reference>
<evidence type="ECO:0000305" key="1"/>
<evidence type="ECO:0000305" key="2">
    <source>
    </source>
</evidence>
<name>UXUB_BACSU</name>
<proteinExistence type="evidence at transcript level"/>